<accession>Q5ANJ4</accession>
<accession>A0A1D8PJY3</accession>
<gene>
    <name type="primary">TEC1</name>
    <name type="ordered locus">CAALFM_C304530CA</name>
    <name type="ORF">CaO19.13329</name>
    <name type="ORF">CaO19.5908</name>
</gene>
<protein>
    <recommendedName>
        <fullName>Transcription activator TEC1</fullName>
    </recommendedName>
</protein>
<reference key="1">
    <citation type="journal article" date="2004" name="Proc. Natl. Acad. Sci. U.S.A.">
        <title>The diploid genome sequence of Candida albicans.</title>
        <authorList>
            <person name="Jones T."/>
            <person name="Federspiel N.A."/>
            <person name="Chibana H."/>
            <person name="Dungan J."/>
            <person name="Kalman S."/>
            <person name="Magee B.B."/>
            <person name="Newport G."/>
            <person name="Thorstenson Y.R."/>
            <person name="Agabian N."/>
            <person name="Magee P.T."/>
            <person name="Davis R.W."/>
            <person name="Scherer S."/>
        </authorList>
    </citation>
    <scope>NUCLEOTIDE SEQUENCE [LARGE SCALE GENOMIC DNA]</scope>
    <source>
        <strain>SC5314 / ATCC MYA-2876</strain>
    </source>
</reference>
<reference key="2">
    <citation type="journal article" date="2007" name="Genome Biol.">
        <title>Assembly of the Candida albicans genome into sixteen supercontigs aligned on the eight chromosomes.</title>
        <authorList>
            <person name="van het Hoog M."/>
            <person name="Rast T.J."/>
            <person name="Martchenko M."/>
            <person name="Grindle S."/>
            <person name="Dignard D."/>
            <person name="Hogues H."/>
            <person name="Cuomo C."/>
            <person name="Berriman M."/>
            <person name="Scherer S."/>
            <person name="Magee B.B."/>
            <person name="Whiteway M."/>
            <person name="Chibana H."/>
            <person name="Nantel A."/>
            <person name="Magee P.T."/>
        </authorList>
    </citation>
    <scope>GENOME REANNOTATION</scope>
    <source>
        <strain>SC5314 / ATCC MYA-2876</strain>
    </source>
</reference>
<reference key="3">
    <citation type="journal article" date="2013" name="Genome Biol.">
        <title>Assembly of a phased diploid Candida albicans genome facilitates allele-specific measurements and provides a simple model for repeat and indel structure.</title>
        <authorList>
            <person name="Muzzey D."/>
            <person name="Schwartz K."/>
            <person name="Weissman J.S."/>
            <person name="Sherlock G."/>
        </authorList>
    </citation>
    <scope>NUCLEOTIDE SEQUENCE [LARGE SCALE GENOMIC DNA]</scope>
    <scope>GENOME REANNOTATION</scope>
    <source>
        <strain>SC5314 / ATCC MYA-2876</strain>
    </source>
</reference>
<reference key="4">
    <citation type="journal article" date="2000" name="Mol. Microbiol.">
        <title>The TEA/ATTS transcription factor CaTec1p regulates hyphal development and virulence in Candida albicans.</title>
        <authorList>
            <person name="Schweizer A."/>
            <person name="Rupp S."/>
            <person name="Taylor B.N."/>
            <person name="Rollinghoff M."/>
            <person name="Schroppel K."/>
        </authorList>
    </citation>
    <scope>FUNCTION</scope>
    <scope>DISRUPTION PHENOTYPE</scope>
</reference>
<reference key="5">
    <citation type="journal article" date="2001" name="J. Biol. Chem.">
        <title>DNA array studies demonstrate convergent regulation of virulence factors by Cph1, Cph2, and Efg1 in Candida albicans.</title>
        <authorList>
            <person name="Lane S."/>
            <person name="Birse C."/>
            <person name="Zhou S."/>
            <person name="Matson R."/>
            <person name="Liu H."/>
        </authorList>
    </citation>
    <scope>INDUCTION</scope>
</reference>
<reference key="6">
    <citation type="journal article" date="2001" name="Mol. Cell. Biol.">
        <title>The basic helix-loop-helix transcription factor Cph2 regulates hyphal development in Candida albicans partly via TEC1.</title>
        <authorList>
            <person name="Lane S."/>
            <person name="Zhou S."/>
            <person name="Pan T."/>
            <person name="Dai Q."/>
            <person name="Liu H."/>
        </authorList>
    </citation>
    <scope>FUNCTION</scope>
    <scope>INDUCTION</scope>
</reference>
<reference key="7">
    <citation type="journal article" date="2004" name="Infect. Immun.">
        <title>Tec1p-independent activation of a hypha-associated Candida albicans virulence gene during infection.</title>
        <authorList>
            <person name="Staib P."/>
            <person name="Binder A."/>
            <person name="Kretschmar M."/>
            <person name="Nichterlein T."/>
            <person name="Schroppel K."/>
            <person name="Morschhauser J."/>
        </authorList>
    </citation>
    <scope>FUNCTION</scope>
</reference>
<reference key="8">
    <citation type="journal article" date="2005" name="Biotechnol. Prog.">
        <title>Identification of Candida albicans genes that induce Saccharomyces cerevisiae cell adhesion and morphogenesis.</title>
        <authorList>
            <person name="Li F."/>
            <person name="Palecek S.P."/>
        </authorList>
    </citation>
    <scope>FUNCTION</scope>
</reference>
<reference key="9">
    <citation type="journal article" date="2005" name="Curr. Biol.">
        <title>Regulation of cell-surface genes and biofilm formation by the C. albicans transcription factor Bcr1p.</title>
        <authorList>
            <person name="Nobile C.J."/>
            <person name="Mitchell A.P."/>
        </authorList>
    </citation>
    <scope>FUNCTION</scope>
    <scope>DISRUPTION PHENOTYPE</scope>
</reference>
<reference key="10">
    <citation type="journal article" date="2005" name="Eukaryot. Cell">
        <title>Regulation of the Cdc42/Cdc24 GTPase module during Candida albicans hyphal growth.</title>
        <authorList>
            <person name="Bassilana M."/>
            <person name="Hopkins J."/>
            <person name="Arkowitz R.A."/>
        </authorList>
    </citation>
    <scope>FUNCTION</scope>
</reference>
<reference key="11">
    <citation type="journal article" date="2005" name="Mol. Microbiol.">
        <title>The Mep2p ammonium permease controls nitrogen starvation-induced filamentous growth in Candida albicans.</title>
        <authorList>
            <person name="Biswas K."/>
            <person name="Morschhauser J."/>
        </authorList>
    </citation>
    <scope>FUNCTION</scope>
    <scope>DISRUPTION PHENOTYPE</scope>
</reference>
<reference key="12">
    <citation type="journal article" date="2006" name="Yeast">
        <title>Repression of CDC28 reduces the expression of the morphology-related transcription factors, Efg1p, Nrg1p, Rbf1p, Rim101p, Fkh2p and Tec1p and induces cell elongation in Candida albicans.</title>
        <authorList>
            <person name="Umeyama T."/>
            <person name="Kaneko A."/>
            <person name="Niimi M."/>
            <person name="Uehara Y."/>
        </authorList>
    </citation>
    <scope>INDUCTION</scope>
</reference>
<reference key="13">
    <citation type="journal article" date="2007" name="Eukaryot. Cell">
        <title>Developmental regulation of an adhesin gene during cellular morphogenesis in the fungal pathogen Candida albicans.</title>
        <authorList>
            <person name="Argimon S."/>
            <person name="Wishart J.A."/>
            <person name="Leng R."/>
            <person name="Macaskill S."/>
            <person name="Mavor A."/>
            <person name="Alexandris T."/>
            <person name="Nicholls S."/>
            <person name="Knight A.W."/>
            <person name="Enjalbert B."/>
            <person name="Walmsley R."/>
            <person name="Odds F.C."/>
            <person name="Gow N.A."/>
            <person name="Brown A.J."/>
        </authorList>
    </citation>
    <scope>FUNCTION</scope>
</reference>
<reference key="14">
    <citation type="journal article" date="2007" name="Fungal Genet. Biol.">
        <title>PGA4, a GAS homologue from Candida albicans, is up-regulated early in infection processes.</title>
        <authorList>
            <person name="Eckert S.E."/>
            <person name="Heinz W.J."/>
            <person name="Zakikhany K."/>
            <person name="Thewes S."/>
            <person name="Haynes K."/>
            <person name="Hube B."/>
            <person name="Muhlschlegel F.A."/>
        </authorList>
    </citation>
    <scope>FUNCTION</scope>
</reference>
<reference key="15">
    <citation type="journal article" date="2009" name="Appl. Environ. Microbiol.">
        <title>Hypoxic adaptation by Efg1 regulates biofilm formation by Candida albicans.</title>
        <authorList>
            <person name="Stichternoth C."/>
            <person name="Ernst J.F."/>
        </authorList>
    </citation>
    <scope>FUNCTION</scope>
    <scope>DISRUPTION PHENOTYPE</scope>
</reference>
<reference key="16">
    <citation type="journal article" date="2009" name="PLoS Pathog.">
        <title>The protein kinase Tor1 regulates adhesin gene expression in Candida albicans.</title>
        <authorList>
            <person name="Bastidas R.J."/>
            <person name="Heitman J."/>
            <person name="Cardenas M.E."/>
        </authorList>
    </citation>
    <scope>INDUCTION</scope>
</reference>
<reference key="17">
    <citation type="journal article" date="2010" name="Eukaryot. Cell">
        <title>Adaptations of Candida albicans for growth in the mammalian intestinal tract.</title>
        <authorList>
            <person name="Rosenbach A."/>
            <person name="Dignard D."/>
            <person name="Pierce J.V."/>
            <person name="Whiteway M."/>
            <person name="Kumamoto C.A."/>
        </authorList>
    </citation>
    <scope>FUNCTION</scope>
</reference>
<reference key="18">
    <citation type="journal article" date="2010" name="Microbes Infect.">
        <title>Role of filamentation in Galleria mellonella killing by Candida albicans.</title>
        <authorList>
            <person name="Fuchs B.B."/>
            <person name="Eby J."/>
            <person name="Nobile C.J."/>
            <person name="El Khoury J.B."/>
            <person name="Mitchell A.P."/>
            <person name="Mylonakis E."/>
        </authorList>
    </citation>
    <scope>FUNCTION</scope>
    <scope>DISRUPTION PHENOTYPE</scope>
</reference>
<reference key="19">
    <citation type="journal article" date="2010" name="Microbiology">
        <title>Pseudomonas aeruginosa secreted factors impair biofilm development in Candida albicans.</title>
        <authorList>
            <person name="Holcombe L.J."/>
            <person name="McAlester G."/>
            <person name="Munro C.A."/>
            <person name="Enjalbert B."/>
            <person name="Brown A.J."/>
            <person name="Gow N.A."/>
            <person name="Ding C."/>
            <person name="Butler G."/>
            <person name="O'Gara F."/>
            <person name="Morrissey J.P."/>
        </authorList>
    </citation>
    <scope>INDUCTION</scope>
</reference>
<reference key="20">
    <citation type="journal article" date="2010" name="PLoS Biol.">
        <title>Tec1 mediates the pheromone response of the white phenotype of Candida albicans: insights into the evolution of new signal transduction pathways.</title>
        <authorList>
            <person name="Sahni N."/>
            <person name="Yi S."/>
            <person name="Daniels K.J."/>
            <person name="Huang G."/>
            <person name="Srikantha T."/>
            <person name="Soll D.R."/>
        </authorList>
    </citation>
    <scope>FUNCTION</scope>
    <scope>INDUCTION</scope>
</reference>
<reference key="21">
    <citation type="journal article" date="2011" name="Eukaryot. Cell">
        <title>Conjugated linoleic acid inhibits hyphal growth in Candida albicans by modulating Ras1p cellular levels and downregulating TEC1 expression.</title>
        <authorList>
            <person name="Shareck J."/>
            <person name="Nantel A."/>
            <person name="Belhumeur P."/>
        </authorList>
    </citation>
    <scope>INDUCTION</scope>
</reference>
<reference key="22">
    <citation type="journal article" date="2011" name="Eukaryot. Cell">
        <title>Killing of Candida albicans filaments by Salmonella enterica serovar Typhimurium is mediated by sopB effectors, parts of a type III secretion system.</title>
        <authorList>
            <person name="Kim Y."/>
            <person name="Mylonakis E."/>
        </authorList>
    </citation>
    <scope>INDUCTION</scope>
</reference>
<reference key="23">
    <citation type="journal article" date="2011" name="PLoS ONE">
        <title>From attachment to damage: defined genes of Candida albicans mediate adhesion, invasion and damage during interaction with oral epithelial cells.</title>
        <authorList>
            <person name="Wachtler B."/>
            <person name="Wilson D."/>
            <person name="Haedicke K."/>
            <person name="Dalle F."/>
            <person name="Hube B."/>
        </authorList>
    </citation>
    <scope>FUNCTION</scope>
    <scope>DISRUPTION PHENOTYPE</scope>
</reference>
<reference key="24">
    <citation type="journal article" date="2012" name="Cell">
        <title>A recently evolved transcriptional network controls biofilm development in Candida albicans.</title>
        <authorList>
            <person name="Nobile C.J."/>
            <person name="Fox E.P."/>
            <person name="Nett J.E."/>
            <person name="Sorrells T.R."/>
            <person name="Mitrovich Q.M."/>
            <person name="Hernday A.D."/>
            <person name="Tuch B.B."/>
            <person name="Andes D.R."/>
            <person name="Johnson A.D."/>
        </authorList>
    </citation>
    <scope>FUNCTION</scope>
    <scope>DISRUPTION PHENOTYPE</scope>
</reference>
<reference key="25">
    <citation type="journal article" date="2012" name="Eukaryot. Cell">
        <title>Divergent targets of Candida albicans biofilm regulator Bcr1 in vitro and in vivo.</title>
        <authorList>
            <person name="Fanning S."/>
            <person name="Xu W."/>
            <person name="Solis N."/>
            <person name="Woolford C.A."/>
            <person name="Filler S.G."/>
            <person name="Mitchell A.P."/>
        </authorList>
    </citation>
    <scope>INDUCTION</scope>
</reference>
<reference key="26">
    <citation type="journal article" date="2012" name="Eukaryot. Cell">
        <title>The 'finger,' a unique multicellular morphology of Candida albicans induced by CO2 and dependent upon the Ras1-cyclic AMP pathway.</title>
        <authorList>
            <person name="Daniels K.J."/>
            <person name="Pujol C."/>
            <person name="Srikantha T."/>
            <person name="Soll D.R."/>
        </authorList>
    </citation>
    <scope>FUNCTION</scope>
</reference>
<reference key="27">
    <citation type="journal article" date="2012" name="PLoS Genet.">
        <title>A histone deacetylase adjusts transcription kinetics at coding sequences during Candida albicans morphogenesis.</title>
        <authorList>
            <person name="Hnisz D."/>
            <person name="Bardet A.F."/>
            <person name="Nobile C.J."/>
            <person name="Petryshyn A."/>
            <person name="Glaser W."/>
            <person name="Schock U."/>
            <person name="Stark A."/>
            <person name="Kuchler K."/>
        </authorList>
    </citation>
    <scope>INDUCTION</scope>
</reference>
<reference key="28">
    <citation type="journal article" date="2012" name="PLoS ONE">
        <title>Roles of Candida albicans Gat2, a GATA-type zinc finger transcription factor, in biofilm formation, filamentous growth and virulence.</title>
        <authorList>
            <person name="Du H."/>
            <person name="Guan G."/>
            <person name="Xie J."/>
            <person name="Sun Y."/>
            <person name="Tong Y."/>
            <person name="Zhang L."/>
            <person name="Huang G."/>
        </authorList>
    </citation>
    <scope>FUNCTION</scope>
</reference>
<reference key="29">
    <citation type="journal article" date="2012" name="Transcription">
        <title>A sticky situation: untangling the transcriptional network controlling biofilm development in Candida albicans.</title>
        <authorList>
            <person name="Fox E.P."/>
            <person name="Nobile C.J."/>
        </authorList>
    </citation>
    <scope>FUNCTION</scope>
    <scope>DNA-BINDING</scope>
</reference>
<reference key="30">
    <citation type="journal article" date="2013" name="J. Investig. Clin. Dent.">
        <title>Secretory products of Escherichia coli biofilm modulate Candida biofilm formation and hyphal development.</title>
        <authorList>
            <person name="Bandara H.M."/>
            <person name="Cheung B.P."/>
            <person name="Watt R.M."/>
            <person name="Jin L.J."/>
            <person name="Samaranayake L.P."/>
        </authorList>
    </citation>
    <scope>INDUCTION</scope>
</reference>
<reference key="31">
    <citation type="journal article" date="2013" name="Mol. Microbiol.">
        <title>Bcr1 plays a central role in the regulation of opaque cell filamentation in Candida albicans.</title>
        <authorList>
            <person name="Guan G."/>
            <person name="Xie J."/>
            <person name="Tao L."/>
            <person name="Nobile C.J."/>
            <person name="Sun Y."/>
            <person name="Cao C."/>
            <person name="Tong Y."/>
            <person name="Huang G."/>
        </authorList>
    </citation>
    <scope>FUNCTION</scope>
    <scope>DISRUPTION PHENOTYPE</scope>
</reference>
<reference key="32">
    <citation type="journal article" date="2013" name="PLoS ONE">
        <title>Effect of tetrandrine against Candida albicans biofilms.</title>
        <authorList>
            <person name="Zhao L.X."/>
            <person name="Li D.D."/>
            <person name="Hu D.D."/>
            <person name="Hu G.H."/>
            <person name="Yan L."/>
            <person name="Wang Y."/>
            <person name="Jiang Y.Y."/>
        </authorList>
    </citation>
    <scope>INDUCTION</scope>
</reference>
<reference key="33">
    <citation type="journal article" date="2013" name="PLoS Pathog.">
        <title>Genetic control of conventional and pheromone-stimulated biofilm formation in Candida albicans.</title>
        <authorList>
            <person name="Lin C.H."/>
            <person name="Kabrawala S."/>
            <person name="Fox E.P."/>
            <person name="Nobile C.J."/>
            <person name="Johnson A.D."/>
            <person name="Bennett R.J."/>
        </authorList>
    </citation>
    <scope>FUNCTION</scope>
</reference>
<reference key="34">
    <citation type="journal article" date="2013" name="PLoS Pathog.">
        <title>A comprehensive functional portrait of two heat shock factor-type transcriptional regulators involved in Candida albicans morphogenesis and virulence.</title>
        <authorList>
            <person name="Znaidi S."/>
            <person name="Nesseir A."/>
            <person name="Chauvel M."/>
            <person name="Rossignol T."/>
            <person name="d'Enfert C."/>
        </authorList>
    </citation>
    <scope>INDUCTION</scope>
</reference>
<keyword id="KW-0130">Cell adhesion</keyword>
<keyword id="KW-0238">DNA-binding</keyword>
<keyword id="KW-0539">Nucleus</keyword>
<keyword id="KW-1185">Reference proteome</keyword>
<keyword id="KW-0804">Transcription</keyword>
<keyword id="KW-0805">Transcription regulation</keyword>
<keyword id="KW-0843">Virulence</keyword>
<comment type="function">
    <text evidence="3 4 6 7 8 9 10 12 13 15 17 18 19 21 23 24 26 27 29 31">Transcription factor which regulates genes involved in hyphal development, cell adhesion, biofilm development, and virulence. Plays a role in the formation of 'finger' morphology, a unique multicellular morphology of C.albicans induced by carbon dioxide. Regulates gene expression during intestinal colonization. Required for the expression of the secreted aspartyl proteinases SAP4, SAP5, and SAP6; but also of BCR1, PGA4, and CDC24. Moreover, a positive feedback loop between CDC24 and TEC1 contributes to an increase in active CDC42 at the tip of the germ tube which is important for hyphae formation. Also regulates the pheromone response of the white cell phenotype.</text>
</comment>
<comment type="subcellular location">
    <subcellularLocation>
        <location evidence="34">Nucleus</location>
    </subcellularLocation>
</comment>
<comment type="induction">
    <text evidence="4 5 11 14 16 19 20 22 25 28 30 32 33">Expression is induced by CPH2 which directly binds to the two sterol regulatory element 1-like elements upstream of TEC1. Expression is also regulated by the histone deacetylase complex HDAC3, as well as by TOR1 and EFG1. Moreover, heat shock factor-type transcriptional regulator SFL1 represses expression whereas SFL2 induces expression. In white cells, is up-regulated in the presence of alpha-pheromone. Expression is induced during oropharyngeal candidiasis (OPC). Competitors Escherichia coli, Pseudomonas aeruginosa, and Salmonella typhimurium secreted factors decrease TEC1 expression to impair biofilm formation. Expression is also down-regulated by linoleic acid and tetrandrine.</text>
</comment>
<comment type="disruption phenotype">
    <text evidence="3 8 9 15 17 21 23 31">Impairs the formation of germ tubes and true hyphae; and decreases virulence in a mouse model of systemic candidiasis. Leads to defective biofilm under normoxic conditions but not under hypoxic conditions.</text>
</comment>
<comment type="similarity">
    <text evidence="34">Belongs to the TEC1 family.</text>
</comment>
<name>TEC1_CANAL</name>
<organism>
    <name type="scientific">Candida albicans (strain SC5314 / ATCC MYA-2876)</name>
    <name type="common">Yeast</name>
    <dbReference type="NCBI Taxonomy" id="237561"/>
    <lineage>
        <taxon>Eukaryota</taxon>
        <taxon>Fungi</taxon>
        <taxon>Dikarya</taxon>
        <taxon>Ascomycota</taxon>
        <taxon>Saccharomycotina</taxon>
        <taxon>Pichiomycetes</taxon>
        <taxon>Debaryomycetaceae</taxon>
        <taxon>Candida/Lodderomyces clade</taxon>
        <taxon>Candida</taxon>
    </lineage>
</organism>
<proteinExistence type="evidence at protein level"/>
<feature type="chain" id="PRO_0000425602" description="Transcription activator TEC1">
    <location>
        <begin position="1"/>
        <end position="743"/>
    </location>
</feature>
<feature type="DNA-binding region" description="TEA" evidence="1">
    <location>
        <begin position="178"/>
        <end position="252"/>
    </location>
</feature>
<feature type="region of interest" description="Disordered" evidence="2">
    <location>
        <begin position="1"/>
        <end position="20"/>
    </location>
</feature>
<feature type="region of interest" description="Disordered" evidence="2">
    <location>
        <begin position="104"/>
        <end position="165"/>
    </location>
</feature>
<feature type="region of interest" description="Disordered" evidence="2">
    <location>
        <begin position="629"/>
        <end position="657"/>
    </location>
</feature>
<feature type="compositionally biased region" description="Polar residues" evidence="2">
    <location>
        <begin position="1"/>
        <end position="11"/>
    </location>
</feature>
<feature type="compositionally biased region" description="Low complexity" evidence="2">
    <location>
        <begin position="113"/>
        <end position="137"/>
    </location>
</feature>
<feature type="compositionally biased region" description="Low complexity" evidence="2">
    <location>
        <begin position="630"/>
        <end position="649"/>
    </location>
</feature>
<dbReference type="EMBL" id="CP017625">
    <property type="protein sequence ID" value="AOW28471.1"/>
    <property type="molecule type" value="Genomic_DNA"/>
</dbReference>
<dbReference type="RefSeq" id="XP_723122.1">
    <property type="nucleotide sequence ID" value="XM_718029.1"/>
</dbReference>
<dbReference type="SMR" id="Q5ANJ4"/>
<dbReference type="BioGRID" id="1218355">
    <property type="interactions" value="1"/>
</dbReference>
<dbReference type="STRING" id="237561.Q5ANJ4"/>
<dbReference type="EnsemblFungi" id="C3_04530C_A-T">
    <property type="protein sequence ID" value="C3_04530C_A-T-p1"/>
    <property type="gene ID" value="C3_04530C_A"/>
</dbReference>
<dbReference type="GeneID" id="3635261"/>
<dbReference type="KEGG" id="cal:CAALFM_C304530CA"/>
<dbReference type="CGD" id="CAL0000175954">
    <property type="gene designation" value="TEC1"/>
</dbReference>
<dbReference type="VEuPathDB" id="FungiDB:C3_04530C_A"/>
<dbReference type="eggNOG" id="KOG3841">
    <property type="taxonomic scope" value="Eukaryota"/>
</dbReference>
<dbReference type="HOGENOM" id="CLU_022080_0_0_1"/>
<dbReference type="InParanoid" id="Q5ANJ4"/>
<dbReference type="OMA" id="VHESSKM"/>
<dbReference type="OrthoDB" id="10006572at2759"/>
<dbReference type="PHI-base" id="PHI:10198"/>
<dbReference type="PHI-base" id="PHI:190"/>
<dbReference type="PRO" id="PR:Q5ANJ4"/>
<dbReference type="Proteomes" id="UP000000559">
    <property type="component" value="Chromosome 3"/>
</dbReference>
<dbReference type="GO" id="GO:0000785">
    <property type="term" value="C:chromatin"/>
    <property type="evidence" value="ECO:0000314"/>
    <property type="project" value="CGD"/>
</dbReference>
<dbReference type="GO" id="GO:0005634">
    <property type="term" value="C:nucleus"/>
    <property type="evidence" value="ECO:0000314"/>
    <property type="project" value="CGD"/>
</dbReference>
<dbReference type="GO" id="GO:0005667">
    <property type="term" value="C:transcription regulator complex"/>
    <property type="evidence" value="ECO:0000318"/>
    <property type="project" value="GO_Central"/>
</dbReference>
<dbReference type="GO" id="GO:0001216">
    <property type="term" value="F:DNA-binding transcription activator activity"/>
    <property type="evidence" value="ECO:0000315"/>
    <property type="project" value="CGD"/>
</dbReference>
<dbReference type="GO" id="GO:0003700">
    <property type="term" value="F:DNA-binding transcription factor activity"/>
    <property type="evidence" value="ECO:0000314"/>
    <property type="project" value="CGD"/>
</dbReference>
<dbReference type="GO" id="GO:0000981">
    <property type="term" value="F:DNA-binding transcription factor activity, RNA polymerase II-specific"/>
    <property type="evidence" value="ECO:0000318"/>
    <property type="project" value="GO_Central"/>
</dbReference>
<dbReference type="GO" id="GO:0000978">
    <property type="term" value="F:RNA polymerase II cis-regulatory region sequence-specific DNA binding"/>
    <property type="evidence" value="ECO:0000318"/>
    <property type="project" value="GO_Central"/>
</dbReference>
<dbReference type="GO" id="GO:0043565">
    <property type="term" value="F:sequence-specific DNA binding"/>
    <property type="evidence" value="ECO:0000314"/>
    <property type="project" value="CGD"/>
</dbReference>
<dbReference type="GO" id="GO:0044406">
    <property type="term" value="P:adhesion of symbiont to host"/>
    <property type="evidence" value="ECO:0000316"/>
    <property type="project" value="CGD"/>
</dbReference>
<dbReference type="GO" id="GO:0007155">
    <property type="term" value="P:cell adhesion"/>
    <property type="evidence" value="ECO:0000316"/>
    <property type="project" value="CGD"/>
</dbReference>
<dbReference type="GO" id="GO:0030447">
    <property type="term" value="P:filamentous growth"/>
    <property type="evidence" value="ECO:0000315"/>
    <property type="project" value="CGD"/>
</dbReference>
<dbReference type="GO" id="GO:0044182">
    <property type="term" value="P:filamentous growth of a population of unicellular organisms"/>
    <property type="evidence" value="ECO:0000315"/>
    <property type="project" value="CGD"/>
</dbReference>
<dbReference type="GO" id="GO:0036180">
    <property type="term" value="P:filamentous growth of a population of unicellular organisms in response to biotic stimulus"/>
    <property type="evidence" value="ECO:0000315"/>
    <property type="project" value="CGD"/>
</dbReference>
<dbReference type="GO" id="GO:0007617">
    <property type="term" value="P:mating behavior"/>
    <property type="evidence" value="ECO:0000315"/>
    <property type="project" value="CGD"/>
</dbReference>
<dbReference type="GO" id="GO:1900430">
    <property type="term" value="P:positive regulation of filamentous growth of a population of unicellular organisms"/>
    <property type="evidence" value="ECO:0000315"/>
    <property type="project" value="CGD"/>
</dbReference>
<dbReference type="GO" id="GO:1900445">
    <property type="term" value="P:positive regulation of filamentous growth of a population of unicellular organisms in response to biotic stimulus"/>
    <property type="evidence" value="ECO:0000315"/>
    <property type="project" value="CGD"/>
</dbReference>
<dbReference type="GO" id="GO:0045944">
    <property type="term" value="P:positive regulation of transcription by RNA polymerase II"/>
    <property type="evidence" value="ECO:0000315"/>
    <property type="project" value="CGD"/>
</dbReference>
<dbReference type="GO" id="GO:0006355">
    <property type="term" value="P:regulation of DNA-templated transcription"/>
    <property type="evidence" value="ECO:0000315"/>
    <property type="project" value="CGD"/>
</dbReference>
<dbReference type="GO" id="GO:1900231">
    <property type="term" value="P:regulation of single-species biofilm formation on inanimate substrate"/>
    <property type="evidence" value="ECO:0000315"/>
    <property type="project" value="CGD"/>
</dbReference>
<dbReference type="GO" id="GO:0006357">
    <property type="term" value="P:regulation of transcription by RNA polymerase II"/>
    <property type="evidence" value="ECO:0000315"/>
    <property type="project" value="CGD"/>
</dbReference>
<dbReference type="GO" id="GO:0044011">
    <property type="term" value="P:single-species biofilm formation on inanimate substrate"/>
    <property type="evidence" value="ECO:0000315"/>
    <property type="project" value="CGD"/>
</dbReference>
<dbReference type="Gene3D" id="6.10.20.40">
    <property type="entry name" value="TEA/ATTS domain"/>
    <property type="match status" value="1"/>
</dbReference>
<dbReference type="InterPro" id="IPR000818">
    <property type="entry name" value="TEA/ATTS_dom"/>
</dbReference>
<dbReference type="InterPro" id="IPR038096">
    <property type="entry name" value="TEA/ATTS_sf"/>
</dbReference>
<dbReference type="InterPro" id="IPR050937">
    <property type="entry name" value="TEC1_TEAD_TF"/>
</dbReference>
<dbReference type="PANTHER" id="PTHR11834:SF0">
    <property type="entry name" value="PROTEIN SCALLOPED"/>
    <property type="match status" value="1"/>
</dbReference>
<dbReference type="PANTHER" id="PTHR11834">
    <property type="entry name" value="TRANSCRIPTIONAL ENHANCER FACTOR TEF RELATED"/>
    <property type="match status" value="1"/>
</dbReference>
<dbReference type="Pfam" id="PF01285">
    <property type="entry name" value="TEA"/>
    <property type="match status" value="1"/>
</dbReference>
<dbReference type="PRINTS" id="PR00065">
    <property type="entry name" value="TEADOMAIN"/>
</dbReference>
<dbReference type="SMART" id="SM00426">
    <property type="entry name" value="TEA"/>
    <property type="match status" value="1"/>
</dbReference>
<dbReference type="PROSITE" id="PS00554">
    <property type="entry name" value="TEA_1"/>
    <property type="match status" value="1"/>
</dbReference>
<dbReference type="PROSITE" id="PS51088">
    <property type="entry name" value="TEA_2"/>
    <property type="match status" value="1"/>
</dbReference>
<sequence>MMSQATPSATPVRNADGQKKGKKLPLIVDVAIGNNGKQLYQVHESSKMVRKEMPRSTNFALNDDISDEGFFISQINEQRTPIRKTLGTLSPSSLNQKRIRHDVYDQGDDNSNDDNCQNDVYEQQQQQPQQQQQQQQQLHQPNMYENGNVGVISNDPVSSVGHYDNNPVSHVPTGAYSRVQDTDIWSDDVEEAFEEVLRLIPKSGLNKIKIAGRSCGRNELISDYIFAKTGKFRTRKQVSSHIQVIKNLGQKLDIIQLINDGPIFNSHEEQLESTKKFEDVFSKINLNKSLGFSDSMKRKSDSMPMHLPATKRIRRKHSGNPLNKIKFSNFFMSVNDQYGMNPIVLTIQQNGNDVKSLKLKDNANISSRFPGLSDFKSCPHIPIIHNMVKILLPQLPESYSIDDGFSSSYALKYEEPENASPTHTSIISSSRTYSLFTCVYSYGKEIVKFDEDGIQLNQDREFIPGFWKFFFSTFGDQSEGGLSAAFKGVTIKQILYESSPDSVKKEQDASKVNKSKVKLVLLWEFAKVSECKDALTTTTKLVLPPRASASSSKTTEEVFEYSEPALNSIGGTPTDTTSPNMDLNNQNLSAAATSIPGIRDTIHSASMPDINELPSSAKPQVRLQKTFQSMQHLQPHQMWQQQQQQQPSQGAYTSSVASQSLNTSLSSPYAQYGMPLPQQTIGTFVPPTSQTFGVSYTHNSQHPSANMDLMMLSSMNTGYGNITNNQDYQFGNIGYTEGFTSEF</sequence>
<evidence type="ECO:0000255" key="1">
    <source>
        <dbReference type="PROSITE-ProRule" id="PRU00505"/>
    </source>
</evidence>
<evidence type="ECO:0000256" key="2">
    <source>
        <dbReference type="SAM" id="MobiDB-lite"/>
    </source>
</evidence>
<evidence type="ECO:0000269" key="3">
    <source>
    </source>
</evidence>
<evidence type="ECO:0000269" key="4">
    <source>
    </source>
</evidence>
<evidence type="ECO:0000269" key="5">
    <source>
    </source>
</evidence>
<evidence type="ECO:0000269" key="6">
    <source>
    </source>
</evidence>
<evidence type="ECO:0000269" key="7">
    <source>
    </source>
</evidence>
<evidence type="ECO:0000269" key="8">
    <source>
    </source>
</evidence>
<evidence type="ECO:0000269" key="9">
    <source>
    </source>
</evidence>
<evidence type="ECO:0000269" key="10">
    <source>
    </source>
</evidence>
<evidence type="ECO:0000269" key="11">
    <source>
    </source>
</evidence>
<evidence type="ECO:0000269" key="12">
    <source>
    </source>
</evidence>
<evidence type="ECO:0000269" key="13">
    <source>
    </source>
</evidence>
<evidence type="ECO:0000269" key="14">
    <source>
    </source>
</evidence>
<evidence type="ECO:0000269" key="15">
    <source>
    </source>
</evidence>
<evidence type="ECO:0000269" key="16">
    <source>
    </source>
</evidence>
<evidence type="ECO:0000269" key="17">
    <source>
    </source>
</evidence>
<evidence type="ECO:0000269" key="18">
    <source>
    </source>
</evidence>
<evidence type="ECO:0000269" key="19">
    <source>
    </source>
</evidence>
<evidence type="ECO:0000269" key="20">
    <source>
    </source>
</evidence>
<evidence type="ECO:0000269" key="21">
    <source>
    </source>
</evidence>
<evidence type="ECO:0000269" key="22">
    <source>
    </source>
</evidence>
<evidence type="ECO:0000269" key="23">
    <source>
    </source>
</evidence>
<evidence type="ECO:0000269" key="24">
    <source>
    </source>
</evidence>
<evidence type="ECO:0000269" key="25">
    <source>
    </source>
</evidence>
<evidence type="ECO:0000269" key="26">
    <source>
    </source>
</evidence>
<evidence type="ECO:0000269" key="27">
    <source>
    </source>
</evidence>
<evidence type="ECO:0000269" key="28">
    <source>
    </source>
</evidence>
<evidence type="ECO:0000269" key="29">
    <source>
    </source>
</evidence>
<evidence type="ECO:0000269" key="30">
    <source>
    </source>
</evidence>
<evidence type="ECO:0000269" key="31">
    <source>
    </source>
</evidence>
<evidence type="ECO:0000269" key="32">
    <source>
    </source>
</evidence>
<evidence type="ECO:0000269" key="33">
    <source>
    </source>
</evidence>
<evidence type="ECO:0000305" key="34"/>